<sequence length="3788" mass="425287">MSTDSNSLAREFLIDVNQLCNAVVQRAEAREEEEEETHMATLGQYLVHGRGFLLLTKLNSIIDQALTCREELLTLLLSLLPLVWKIPVQEQQATDFNLPLSSDIILTKEKNSSLQKSTQGKLYLEGSAPSGQVSAKVNLFRKIRRQRKSTHRYSVRDARKTQLSTSDSEGNSDEKSTVVSKHRRLHALPRFLTQSPKEGHLVAKPDPSATKEQVLSDTMSVENSREVILRQDSNGDILSEPAALSILSNMNNSPFDLCHVLLSLLEKVCKFDIALNHNSSLALSVVPTLTEFLAGFGDCCNQSDTLEGQLVSAGWTEEPVALVQRMLFRTVLHLMSVDVSTAEAMPESLRKNLTELLRAALKIRACLEKQPEPFSPRQKKTLQEVQEGFVFSKYRHRALLLPELLEGVLQLLISCLQSAASNPFYFSQAMDLVQEFIQHQGFNLFGTAVLQMEWLLTRDGVPSEAAEHLKALINSVIKIMSTVKKVKSEQLHHSMCTRKRHRRCEYSHFMQHHRDLSGLLVSAFKNQLSKSPFEETAEGDVQYPERCCCIAVCAHQCLRLLQQVSLSTTCVQILSGVHSVGICCCMDPKSVIAPLLHAFKLPALKAFQQHILNVLSKLLVDQLGGAELSPRIKKAACNICTVDSDQLAKLGETLQGTLCGAGPTSGLPSPSYRFQGILPSSGSEDLLWKWDALEAYQSFVFQEDRLHNIQIANHICNLLQKGNVVVQWKLYNYIFNPVLQRGVELVHHCQQLSIPSAQTHMCSQLKQYLPQEVLQIYLKTLPVLLKSRVIRDLFLSCNGVNHIIELNYLDGIRSHSLKAFETLIVSLGEQQKDAAVLDVDGLDIQQELPSLSVGPSLHKQQASSDSPCSLRKFYASLREPDPKKRKTIHQDVHINTINLFLCVAFLCVSKEADSDRESANESEDTSGYDSPPSEPLSHMLPCLSLEDVVLPSPECLHHAADIWSMCRWIYMLNSVFQKQFHRLGGFQVCHELIFMIIQKLFRSHTEDQGRRQGEMSRNENQELIRISYPELTLKGDVSSATAPDLGFLRKSADSVRGFQSQPVLPTSAEQIVATESVPGERKAFMSQQSETSLQSIRLLESLLDICLHSARACQQKMELELPSQGLSVENILCELREHLSQSKVAETELAKPLFDALLRVALGNHSADLGPGDAVTEKSHPSEEELLSQPGDFSEEAEDSQCCSLKLLGEEEGYEADSESNPEDVDTQDDGVELNPEAEGFSGSIVSNNLLENLTHGEIIYPEICMLGLNLLSASKAKLDVLAHVFESFLKIVRQKEKNISLLIQQGTVKILLGGFLNILTQTNSDFQACQRVLVDLLVSLMSSRTCSEDLTLLWRIFLEKSPCTEILLLGIHKIVESDFTMSPSQCLTFPFLHTPSLSNGVLSQKPPGILNSKALGLLRRARISRGKKEADRESFPYRLLSSWHIAPIHLPLLGQNCWPHLSEGFSVSLVGLMWNTSNESESAAERGKRVKKRNKPSVLEDSSFEGAEGDRPEVTESINPGDRLIEDGCIHLISLGSKALMIQVWADPHSGTFIFRVCMDSNDDTKAVSLAQVESQENIFFPSKWQHLVLTYIQHPQGKKNVHGEISIWVSGQRKTDVILDFVLPRKTSLSSDSNKTFCMIGHCLTSQEESLQLAGKWDLGNLLLFNGAKIGSQEAFFLYACGPNYTSIMPCKYGQPVIDYSKYINKDILRCDEIRDLFMTKKEVDVGLLIESLSVVYTTCCPAQYTIYEPVIRLKGQVKTQPSQRPFSSKEAQSILLEPSQLKGLQPTECKAIQGILHEIGGAGTFVFLFARVVELSSCEETQALALRVILSLIKYSQQRTQELENCNGLSMIHQVLVKQKCIVGFHILKTLLEGCCGEEVIHVSEHGEFKLDVESHAIIQDVKLLQELLLDWKIWNKAEQGVWETLLAALEVLIRVEHHQQQFNIKQLLNAHVVHHFLLTCQVLQEHREGQLTSMPREVCRSFVKIIAEVLGSPPDLELLTVIFNFLLAVHPPTNTYVCHNPTNFYFSLHIDGKIFQEKVQSLAYLRHSSSGGQAFPSPGFLVISPSAFTAAPPEGTSSSNIVPQRMAAQMVRSRSLPAFPTYLPLIRAQKLAASLGFSVDKLQNIADANPEKQNLLGRPYALKTSKEEAFISSCESAKTVCEMEALLGAHASANGVSRGSPRFPRARVDHKDVGTEPRSDDDSPGDESYPRRPDNLKGLASFQRSQSTVASLGLAFPSQNGSAVASRWPSLVDRNADDWENFTFSPAYEASYNRATSTHSVIEDCLIPICCGLYELLSGVLLVLPDAMLEDVMDRIIQADILLVLVNHPSPAIQQGVIKLLHAYINRASKEQKDKFLKNRGFSLLANQLYLHRGTQELLECFVEMFFGRPIGLDEEFDLEEVKHMELFQKWSVIPVLGLIETSLYDNVLLHNALLLLLQVLNSCSKVADMLLDNGLLYVLCNTVAALNGLEKNIPVNEYKLLACDIQQLFIAVTIHACSSSGTQYFRVIEDLIVLLGYLHNSKNKRTQNMALALQLRVLQAALEFIRSTANHDSESPVHSPSAHRHSVPPKRRSIAGSRKFPLAQTESLLMKMRSVASDELHSMMQRRMSQEHPSQASEAELAQRLQRLTILAVNRIIYQELNSDIIDILRTPENTSQSKTSVSQTEISEEDMHHEQPSVYNPFQKEMLTYLLDGFKVCIGSSKTSVSKQQWTKILGSCKETLRDQLGRLLAHILSPTHTVQERKQILEIVHEPAHQDILRDCLSPSPQHGAKLVLYLSELIHNHQDELSEEEMDTAELLMNALKLCGHKCIPPSAPSKPELIKIIREEQKKYESEESVSKGSWQKTVNNNQQSLFQRLDFKSKDISKIAADITQAVSLSQGIERKKVIQHIRGMYKVDLSASRHWQECIQQLTHDRAVWYDPIYYPTSWQLDPTEGPNRERRRLQRCYLTIPNKYLLRDRQKSEGVLRPPLSYLFEDKTHSSFSSTVKDKAASESIRVNRRCISVAPSRETAGELLLGKCGMYFVEDNASDAVESSSLQGELEPASFSWTYEEIKEVHRRWWQLRDNAVEIFLTNGRTLLLAFDNNKVRDDVYQSILTNNLPNLLEYGNITALTNLWYSGQITNFEYLTHLNKHAGRSFNDLMQYPVFPFILSDYVSETLDLNDPSIYRNLSKPIAVQYKEKEDRYVDTYKYLEEEYRKGAREDDPMPPVQPYHYGSHYSNSGTVLHFLVRMPPFTKMFLAYQDQSFDIPDRTFHSTNTTWRLSSFESMTDVKELIPEFFYLPEFLVNREGFDFGVRQNGERVNHVNLPPWARNDPRLFILIHRQALESDHVSQNICHWIDLVFGYKQKGKASVQAINVFHPATYFGMDVSAVEDPVQRRALETMIKTYGQTPRQLFHTAHASRPGAKLNIEGELPAAVGLLVQFAFRETREPVKEVTHPSPLSWIKGLKWGEYVGSPSAPVPVVCFSQPHGERFGSLQALPTRAICGLSRNFCLLMTYNKEQGVRSMNNTNIQWSAILSWGYADNILRLKSKQSEPPINFIQSSQQHQVTSCAWVPDSCQLFTGSKCGVITAYTNRLTSSTPSEIEMESQMHLYGHTEEITGLCVCKPYSVMISVSRDGTCIVWDLNRLCYVQSLAGHKSPVTAVSASETSGDIATVCDSAGGGSDLRLWTVNGDLVGHVHCREIICSVAFSNQPEGVSINVIAGGLENGIVRLWSTWDLKPVREITFPKSNKPIISLTFSCDGHHLYTANSEGTVIAWCRKDQQRVKLPMFYSFLSSYAAG</sequence>
<comment type="function">
    <text evidence="1 5">Adapter protein that regulates and/or fission of intracellular vesicles such as lysosomes (By similarity). Might regulate trafficking of effectors involved in exocytosis (By similarity). In cytotoxic T-cells and natural killer (NK) cells, has role in the regulation of size, number and exocytosis of lytic granules (By similarity). In macrophages and dendritic cells, regulates phagosome maturation by controlling the conversion of early phagosomal compartments into late phagosomes (PubMed:27881733). In macrophages and dendritic cells, specifically involved in TLR3- and TLR4-induced production of pro-inflammatory cytokines by regulating the endosomal TLR3- TICAM1/TRIF and TLR4- TICAM1/TRIF signaling pathways (PubMed:27881733).</text>
</comment>
<comment type="subunit">
    <text evidence="1">Interacts with CPAP, LIP8 and ZNF521.</text>
</comment>
<comment type="subcellular location">
    <subcellularLocation>
        <location evidence="8">Cytoplasm</location>
    </subcellularLocation>
</comment>
<comment type="alternative products">
    <event type="alternative splicing"/>
    <isoform>
        <id>P97412-1</id>
        <name>1</name>
        <sequence type="displayed"/>
    </isoform>
    <isoform>
        <id>P97412-2</id>
        <name>2</name>
        <sequence type="described" ref="VSP_006783 VSP_006784"/>
    </isoform>
    <text>Additional isoforms seem to exist.</text>
</comment>
<comment type="tissue specificity">
    <text evidence="5">Expressed in the heart, lung, liver, spleen, brain and in different immune cell types (purified B and T lymphocytes, bone marrow-derived macrophages and dendritic cells).</text>
</comment>
<comment type="disease">
    <text evidence="5 6">Defects in Lyst are the cause of beige (bg), an autosomal recessive disorder characterized by hypopigmentation, bleeding, immune cell dysfunction, abnormal intracellular transport to and from the lysosome, and giant inclusion bodies in a variety of cell types.</text>
</comment>
<feature type="chain" id="PRO_0000051072" description="Lysosomal-trafficking regulator">
    <location>
        <begin position="1"/>
        <end position="3788"/>
    </location>
</feature>
<feature type="repeat" description="WD 1">
    <location>
        <begin position="662"/>
        <end position="700"/>
    </location>
</feature>
<feature type="repeat" description="WD 2">
    <location>
        <begin position="1576"/>
        <end position="1620"/>
    </location>
</feature>
<feature type="domain" description="BEACH-type PH" evidence="3">
    <location>
        <begin position="2996"/>
        <end position="3102"/>
    </location>
</feature>
<feature type="domain" description="BEACH" evidence="2">
    <location>
        <begin position="3126"/>
        <end position="3409"/>
    </location>
</feature>
<feature type="repeat" description="WD 3">
    <location>
        <begin position="3550"/>
        <end position="3589"/>
    </location>
</feature>
<feature type="repeat" description="WD 4">
    <location>
        <begin position="3601"/>
        <end position="3640"/>
    </location>
</feature>
<feature type="repeat" description="WD 5">
    <location>
        <begin position="3643"/>
        <end position="3686"/>
    </location>
</feature>
<feature type="repeat" description="WD 6">
    <location>
        <begin position="3687"/>
        <end position="3731"/>
    </location>
</feature>
<feature type="repeat" description="WD 7">
    <location>
        <begin position="3736"/>
        <end position="3775"/>
    </location>
</feature>
<feature type="region of interest" description="Disordered" evidence="4">
    <location>
        <begin position="148"/>
        <end position="180"/>
    </location>
</feature>
<feature type="region of interest" description="Disordered" evidence="4">
    <location>
        <begin position="198"/>
        <end position="217"/>
    </location>
</feature>
<feature type="region of interest" description="Disordered" evidence="4">
    <location>
        <begin position="1169"/>
        <end position="1196"/>
    </location>
</feature>
<feature type="region of interest" description="Disordered" evidence="4">
    <location>
        <begin position="1213"/>
        <end position="1240"/>
    </location>
</feature>
<feature type="region of interest" description="Disordered" evidence="4">
    <location>
        <begin position="1482"/>
        <end position="1519"/>
    </location>
</feature>
<feature type="region of interest" description="Disordered" evidence="4">
    <location>
        <begin position="2177"/>
        <end position="2221"/>
    </location>
</feature>
<feature type="region of interest" description="Disordered" evidence="4">
    <location>
        <begin position="2556"/>
        <end position="2581"/>
    </location>
</feature>
<feature type="region of interest" description="Disordered" evidence="4">
    <location>
        <begin position="2659"/>
        <end position="2681"/>
    </location>
</feature>
<feature type="compositionally biased region" description="Acidic residues" evidence="4">
    <location>
        <begin position="1213"/>
        <end position="1232"/>
    </location>
</feature>
<feature type="compositionally biased region" description="Basic and acidic residues" evidence="4">
    <location>
        <begin position="2190"/>
        <end position="2205"/>
    </location>
</feature>
<feature type="compositionally biased region" description="Basic residues" evidence="4">
    <location>
        <begin position="2566"/>
        <end position="2578"/>
    </location>
</feature>
<feature type="compositionally biased region" description="Polar residues" evidence="4">
    <location>
        <begin position="2659"/>
        <end position="2671"/>
    </location>
</feature>
<feature type="modified residue" description="Phosphoserine" evidence="10">
    <location>
        <position position="164"/>
    </location>
</feature>
<feature type="modified residue" description="Phosphothreonine" evidence="10">
    <location>
        <position position="165"/>
    </location>
</feature>
<feature type="modified residue" description="Phosphoserine" evidence="10">
    <location>
        <position position="166"/>
    </location>
</feature>
<feature type="modified residue" description="Phosphoserine" evidence="10">
    <location>
        <position position="1503"/>
    </location>
</feature>
<feature type="modified residue" description="Phosphoserine" evidence="10">
    <location>
        <position position="1504"/>
    </location>
</feature>
<feature type="modified residue" description="Phosphoserine" evidence="10">
    <location>
        <position position="2099"/>
    </location>
</feature>
<feature type="modified residue" description="Phosphoserine" evidence="10">
    <location>
        <position position="2118"/>
    </location>
</feature>
<feature type="modified residue" description="Phosphoserine" evidence="9 10">
    <location>
        <position position="2203"/>
    </location>
</feature>
<feature type="modified residue" description="Phosphoserine" evidence="10">
    <location>
        <position position="2207"/>
    </location>
</feature>
<feature type="modified residue" description="Phosphoserine" evidence="10">
    <location>
        <position position="2254"/>
    </location>
</feature>
<feature type="splice variant" id="VSP_006783" description="In isoform 2." evidence="7">
    <original>EGDRPEVTESINPGDRLIEDGCIHLISLGSKALMIQV</original>
    <variation>GMMAGSDLYTKILQIAACLSFKHIWQYFNVFFKCYSP</variation>
    <location>
        <begin position="1509"/>
        <end position="1545"/>
    </location>
</feature>
<feature type="splice variant" id="VSP_006784" description="In isoform 2." evidence="7">
    <location>
        <begin position="1546"/>
        <end position="3788"/>
    </location>
</feature>
<feature type="sequence variant" description="In bg; macrophages and dendritic cells show impaired pro-inflammatory cytokine production in response to stimulation of TLR3 and TLR4 receptors; shows impaired inflammatory responses to lipopolysaccharides; following bacteria infections, shows defective phagosomal maturation." evidence="5">
    <location>
        <begin position="3741"/>
        <end position="3788"/>
    </location>
</feature>
<proteinExistence type="evidence at protein level"/>
<keyword id="KW-0025">Alternative splicing</keyword>
<keyword id="KW-0963">Cytoplasm</keyword>
<keyword id="KW-0225">Disease variant</keyword>
<keyword id="KW-0581">Phagocytosis</keyword>
<keyword id="KW-0597">Phosphoprotein</keyword>
<keyword id="KW-0653">Protein transport</keyword>
<keyword id="KW-1185">Reference proteome</keyword>
<keyword id="KW-0677">Repeat</keyword>
<keyword id="KW-0813">Transport</keyword>
<keyword id="KW-0853">WD repeat</keyword>
<evidence type="ECO:0000250" key="1">
    <source>
        <dbReference type="UniProtKB" id="Q99698"/>
    </source>
</evidence>
<evidence type="ECO:0000255" key="2">
    <source>
        <dbReference type="PROSITE-ProRule" id="PRU00026"/>
    </source>
</evidence>
<evidence type="ECO:0000255" key="3">
    <source>
        <dbReference type="PROSITE-ProRule" id="PRU01119"/>
    </source>
</evidence>
<evidence type="ECO:0000256" key="4">
    <source>
        <dbReference type="SAM" id="MobiDB-lite"/>
    </source>
</evidence>
<evidence type="ECO:0000269" key="5">
    <source>
    </source>
</evidence>
<evidence type="ECO:0000269" key="6">
    <source>
    </source>
</evidence>
<evidence type="ECO:0000303" key="7">
    <source>
    </source>
</evidence>
<evidence type="ECO:0000305" key="8"/>
<evidence type="ECO:0007744" key="9">
    <source>
    </source>
</evidence>
<evidence type="ECO:0007744" key="10">
    <source>
    </source>
</evidence>
<accession>P97412</accession>
<accession>Q62403</accession>
<accession>Q8VBS6</accession>
<reference key="1">
    <citation type="journal article" date="1997" name="Hum. Mol. Genet.">
        <title>Identification of mutations in two major mRNA isoforms of the Chediak-Higashi syndrome gene in human and mouse.</title>
        <authorList>
            <person name="Barbosa M.D.F.S."/>
            <person name="Barrat F.J."/>
            <person name="Tchernev V.T."/>
            <person name="Nguyen Q.A."/>
            <person name="Mishra V.S."/>
            <person name="Colman S.D."/>
            <person name="Pastural E."/>
            <person name="Dufourcq-Lagelouse R."/>
            <person name="Fischer A."/>
            <person name="Holcombe R.F."/>
            <person name="Wallace M.R."/>
            <person name="Brandt S.J."/>
            <person name="De Saint Basile G."/>
            <person name="Kingsmore S.F."/>
        </authorList>
    </citation>
    <scope>NUCLEOTIDE SEQUENCE [MRNA] (ISOFORM 1)</scope>
    <scope>DISEASE</scope>
</reference>
<reference key="2">
    <citation type="journal article" date="1996" name="Nature">
        <title>Identification of the homologous beige and Chediak-Higashi syndrome genes.</title>
        <authorList>
            <person name="Barbosa M.D.F.S."/>
            <person name="Nguyen Q.A."/>
            <person name="Tchernev V.T."/>
            <person name="Ashley J.A."/>
            <person name="Detter J.C."/>
            <person name="Blaydes S.M."/>
            <person name="Brandt S.J."/>
            <person name="Chotai D."/>
            <person name="Hodgman C."/>
            <person name="Solari R.C.E.S."/>
            <person name="Lovett M."/>
            <person name="Kingsmore S.F."/>
        </authorList>
    </citation>
    <scope>NUCLEOTIDE SEQUENCE [MRNA] (ISOFORM 2)</scope>
    <source>
        <strain>C57BL/6J</strain>
    </source>
</reference>
<reference key="3">
    <citation type="journal article" date="1997" name="Nature">
        <authorList>
            <person name="Barbosa M.D.F.S."/>
            <person name="Nguyen Q.A."/>
            <person name="Tchernev V.T."/>
            <person name="Ashley J.A."/>
            <person name="Detter J.C."/>
            <person name="Blaydes S.M."/>
            <person name="Brandt S.J."/>
            <person name="Chotai D."/>
            <person name="Hodgman C."/>
            <person name="Solari R.C.E.S."/>
            <person name="Lovett M."/>
            <person name="Kingsmore S.F."/>
        </authorList>
    </citation>
    <scope>ERRATUM OF PUBMED:8717042</scope>
</reference>
<reference key="4">
    <citation type="journal article" date="1996" name="Nat. Genet.">
        <title>Identification of the murine beige gene by YAC complementation and positional cloning.</title>
        <authorList>
            <person name="Perou C.M."/>
            <person name="Moore K.J."/>
            <person name="Nagle D.L."/>
            <person name="Misumi D.J."/>
            <person name="Woolf E.A."/>
            <person name="McGrail S.H."/>
            <person name="Holmgren L."/>
            <person name="Brody T.B."/>
            <person name="Dussault B.J."/>
            <person name="Monroe C.A."/>
            <person name="Duyk G.M."/>
            <person name="Pryor R.J."/>
            <person name="Li L."/>
            <person name="Justice M.J."/>
            <person name="Kaplan J."/>
        </authorList>
    </citation>
    <scope>NUCLEOTIDE SEQUENCE [MRNA] OF 1428-3788 (ISOFORM 1)</scope>
    <source>
        <strain>C57BL/6J</strain>
    </source>
</reference>
<reference key="5">
    <citation type="journal article" date="2006" name="Mol. Cell. Proteomics">
        <title>Comprehensive identification of phosphorylation sites in postsynaptic density preparations.</title>
        <authorList>
            <person name="Trinidad J.C."/>
            <person name="Specht C.G."/>
            <person name="Thalhammer A."/>
            <person name="Schoepfer R."/>
            <person name="Burlingame A.L."/>
        </authorList>
    </citation>
    <scope>IDENTIFICATION BY MASS SPECTROMETRY [LARGE SCALE ANALYSIS]</scope>
    <source>
        <tissue>Brain</tissue>
    </source>
</reference>
<reference key="6">
    <citation type="journal article" date="2007" name="Proc. Natl. Acad. Sci. U.S.A.">
        <title>Large-scale phosphorylation analysis of mouse liver.</title>
        <authorList>
            <person name="Villen J."/>
            <person name="Beausoleil S.A."/>
            <person name="Gerber S.A."/>
            <person name="Gygi S.P."/>
        </authorList>
    </citation>
    <scope>PHOSPHORYLATION [LARGE SCALE ANALYSIS] AT SER-2203</scope>
    <scope>IDENTIFICATION BY MASS SPECTROMETRY [LARGE SCALE ANALYSIS]</scope>
    <source>
        <tissue>Liver</tissue>
    </source>
</reference>
<reference key="7">
    <citation type="journal article" date="2009" name="Mol. Cell. Proteomics">
        <title>Large scale localization of protein phosphorylation by use of electron capture dissociation mass spectrometry.</title>
        <authorList>
            <person name="Sweet S.M."/>
            <person name="Bailey C.M."/>
            <person name="Cunningham D.L."/>
            <person name="Heath J.K."/>
            <person name="Cooper H.J."/>
        </authorList>
    </citation>
    <scope>IDENTIFICATION BY MASS SPECTROMETRY [LARGE SCALE ANALYSIS]</scope>
    <source>
        <tissue>Embryonic fibroblast</tissue>
    </source>
</reference>
<reference key="8">
    <citation type="journal article" date="2010" name="Cell">
        <title>A tissue-specific atlas of mouse protein phosphorylation and expression.</title>
        <authorList>
            <person name="Huttlin E.L."/>
            <person name="Jedrychowski M.P."/>
            <person name="Elias J.E."/>
            <person name="Goswami T."/>
            <person name="Rad R."/>
            <person name="Beausoleil S.A."/>
            <person name="Villen J."/>
            <person name="Haas W."/>
            <person name="Sowa M.E."/>
            <person name="Gygi S.P."/>
        </authorList>
    </citation>
    <scope>PHOSPHORYLATION [LARGE SCALE ANALYSIS] AT SER-164; THR-165; SER-166; SER-1503; SER-1504; SER-2099; SER-2118; SER-2203; SER-2207 AND SER-2254</scope>
    <scope>IDENTIFICATION BY MASS SPECTROMETRY [LARGE SCALE ANALYSIS]</scope>
    <source>
        <tissue>Brain</tissue>
        <tissue>Brown adipose tissue</tissue>
        <tissue>Kidney</tissue>
        <tissue>Liver</tissue>
        <tissue>Lung</tissue>
        <tissue>Pancreas</tissue>
        <tissue>Spleen</tissue>
        <tissue>Testis</tissue>
    </source>
</reference>
<reference key="9">
    <citation type="journal article" date="2017" name="J. Exp. Med.">
        <title>Lysosomal trafficking regulator Lyst links membrane trafficking to toll-like receptor-mediated inflammatory responses.</title>
        <authorList>
            <person name="Westphal A."/>
            <person name="Cheng W."/>
            <person name="Yu J."/>
            <person name="Grassl G."/>
            <person name="Krautkraemer M."/>
            <person name="Holst O."/>
            <person name="Foeger N."/>
            <person name="Lee K.H."/>
        </authorList>
    </citation>
    <scope>FUNCTION</scope>
    <scope>TISSUE SPECIFICITY</scope>
    <scope>VARIANT BG 3741-ILE--GLY-3788 DEL</scope>
</reference>
<gene>
    <name type="primary">Lyst</name>
    <name type="synonym">Bg</name>
    <name type="synonym">Chs1</name>
</gene>
<protein>
    <recommendedName>
        <fullName>Lysosomal-trafficking regulator</fullName>
    </recommendedName>
    <alternativeName>
        <fullName>Beige protein</fullName>
    </alternativeName>
    <alternativeName>
        <fullName>CHS1 homolog</fullName>
    </alternativeName>
</protein>
<dbReference type="EMBL" id="U70015">
    <property type="protein sequence ID" value="AAC53011.1"/>
    <property type="molecule type" value="mRNA"/>
</dbReference>
<dbReference type="EMBL" id="L77884">
    <property type="protein sequence ID" value="AAL40134.1"/>
    <property type="molecule type" value="mRNA"/>
</dbReference>
<dbReference type="EMBL" id="U52461">
    <property type="protein sequence ID" value="AAB60778.1"/>
    <property type="molecule type" value="mRNA"/>
</dbReference>
<dbReference type="PIR" id="T30851">
    <property type="entry name" value="T30851"/>
</dbReference>
<dbReference type="RefSeq" id="NP_034878.2">
    <property type="nucleotide sequence ID" value="NM_010748.2"/>
</dbReference>
<dbReference type="SMR" id="P97412"/>
<dbReference type="BioGRID" id="201257">
    <property type="interactions" value="2"/>
</dbReference>
<dbReference type="FunCoup" id="P97412">
    <property type="interactions" value="1305"/>
</dbReference>
<dbReference type="STRING" id="10090.ENSMUSP00000106188"/>
<dbReference type="GlyGen" id="P97412">
    <property type="glycosylation" value="3 sites, 3 N-linked glycans (2 sites)"/>
</dbReference>
<dbReference type="iPTMnet" id="P97412"/>
<dbReference type="PhosphoSitePlus" id="P97412"/>
<dbReference type="SwissPalm" id="P97412"/>
<dbReference type="jPOST" id="P97412"/>
<dbReference type="PaxDb" id="10090-ENSMUSP00000106188"/>
<dbReference type="PeptideAtlas" id="P97412"/>
<dbReference type="ProteomicsDB" id="290203">
    <molecule id="P97412-1"/>
</dbReference>
<dbReference type="ProteomicsDB" id="290204">
    <molecule id="P97412-2"/>
</dbReference>
<dbReference type="Pumba" id="P97412"/>
<dbReference type="DNASU" id="17101"/>
<dbReference type="GeneID" id="17101"/>
<dbReference type="KEGG" id="mmu:17101"/>
<dbReference type="AGR" id="MGI:107448"/>
<dbReference type="CTD" id="1130"/>
<dbReference type="MGI" id="MGI:107448">
    <property type="gene designation" value="Lyst"/>
</dbReference>
<dbReference type="eggNOG" id="KOG1786">
    <property type="taxonomic scope" value="Eukaryota"/>
</dbReference>
<dbReference type="InParanoid" id="P97412"/>
<dbReference type="PhylomeDB" id="P97412"/>
<dbReference type="BioGRID-ORCS" id="17101">
    <property type="hits" value="4 hits in 79 CRISPR screens"/>
</dbReference>
<dbReference type="ChiTaRS" id="Lyst">
    <property type="organism name" value="mouse"/>
</dbReference>
<dbReference type="PRO" id="PR:P97412"/>
<dbReference type="Proteomes" id="UP000000589">
    <property type="component" value="Unplaced"/>
</dbReference>
<dbReference type="RNAct" id="P97412">
    <property type="molecule type" value="protein"/>
</dbReference>
<dbReference type="GO" id="GO:0005829">
    <property type="term" value="C:cytosol"/>
    <property type="evidence" value="ECO:0000314"/>
    <property type="project" value="MGI"/>
</dbReference>
<dbReference type="GO" id="GO:0007596">
    <property type="term" value="P:blood coagulation"/>
    <property type="evidence" value="ECO:0000315"/>
    <property type="project" value="MGI"/>
</dbReference>
<dbReference type="GO" id="GO:0042742">
    <property type="term" value="P:defense response to bacterium"/>
    <property type="evidence" value="ECO:0000315"/>
    <property type="project" value="MGI"/>
</dbReference>
<dbReference type="GO" id="GO:0042832">
    <property type="term" value="P:defense response to protozoan"/>
    <property type="evidence" value="ECO:0000315"/>
    <property type="project" value="MGI"/>
</dbReference>
<dbReference type="GO" id="GO:0051607">
    <property type="term" value="P:defense response to virus"/>
    <property type="evidence" value="ECO:0000315"/>
    <property type="project" value="MGI"/>
</dbReference>
<dbReference type="GO" id="GO:0071621">
    <property type="term" value="P:granulocyte chemotaxis"/>
    <property type="evidence" value="ECO:0000315"/>
    <property type="project" value="MGI"/>
</dbReference>
<dbReference type="GO" id="GO:0007040">
    <property type="term" value="P:lysosome organization"/>
    <property type="evidence" value="ECO:0000315"/>
    <property type="project" value="MGI"/>
</dbReference>
<dbReference type="GO" id="GO:0033364">
    <property type="term" value="P:mast cell secretory granule organization"/>
    <property type="evidence" value="ECO:0000315"/>
    <property type="project" value="MGI"/>
</dbReference>
<dbReference type="GO" id="GO:0032438">
    <property type="term" value="P:melanosome organization"/>
    <property type="evidence" value="ECO:0000315"/>
    <property type="project" value="MGI"/>
</dbReference>
<dbReference type="GO" id="GO:0007017">
    <property type="term" value="P:microtubule-based process"/>
    <property type="evidence" value="ECO:0000315"/>
    <property type="project" value="MGI"/>
</dbReference>
<dbReference type="GO" id="GO:0002446">
    <property type="term" value="P:neutrophil mediated immunity"/>
    <property type="evidence" value="ECO:0000315"/>
    <property type="project" value="MGI"/>
</dbReference>
<dbReference type="GO" id="GO:0006909">
    <property type="term" value="P:phagocytosis"/>
    <property type="evidence" value="ECO:0007669"/>
    <property type="project" value="UniProtKB-KW"/>
</dbReference>
<dbReference type="GO" id="GO:0055091">
    <property type="term" value="P:phospholipid homeostasis"/>
    <property type="evidence" value="ECO:0000315"/>
    <property type="project" value="MGI"/>
</dbReference>
<dbReference type="GO" id="GO:0006644">
    <property type="term" value="P:phospholipid metabolic process"/>
    <property type="evidence" value="ECO:0000315"/>
    <property type="project" value="MGI"/>
</dbReference>
<dbReference type="GO" id="GO:0048753">
    <property type="term" value="P:pigment granule organization"/>
    <property type="evidence" value="ECO:0000315"/>
    <property type="project" value="MGI"/>
</dbReference>
<dbReference type="GO" id="GO:0043473">
    <property type="term" value="P:pigmentation"/>
    <property type="evidence" value="ECO:0000315"/>
    <property type="project" value="MGI"/>
</dbReference>
<dbReference type="GO" id="GO:0032816">
    <property type="term" value="P:positive regulation of natural killer cell activation"/>
    <property type="evidence" value="ECO:0000315"/>
    <property type="project" value="MGI"/>
</dbReference>
<dbReference type="GO" id="GO:0009410">
    <property type="term" value="P:response to xenobiotic stimulus"/>
    <property type="evidence" value="ECO:0000315"/>
    <property type="project" value="MGI"/>
</dbReference>
<dbReference type="GO" id="GO:0033299">
    <property type="term" value="P:secretion of lysosomal enzymes"/>
    <property type="evidence" value="ECO:0000315"/>
    <property type="project" value="MGI"/>
</dbReference>
<dbReference type="GO" id="GO:0002456">
    <property type="term" value="P:T cell mediated immunity"/>
    <property type="evidence" value="ECO:0000315"/>
    <property type="project" value="MGI"/>
</dbReference>
<dbReference type="CDD" id="cd06071">
    <property type="entry name" value="Beach"/>
    <property type="match status" value="1"/>
</dbReference>
<dbReference type="CDD" id="cd01201">
    <property type="entry name" value="PH_BEACH"/>
    <property type="match status" value="1"/>
</dbReference>
<dbReference type="FunFam" id="2.130.10.10:FF:000217">
    <property type="entry name" value="Lysosomal trafficking regulator"/>
    <property type="match status" value="1"/>
</dbReference>
<dbReference type="FunFam" id="2.130.10.10:FF:000292">
    <property type="entry name" value="Lysosomal trafficking regulator"/>
    <property type="match status" value="1"/>
</dbReference>
<dbReference type="FunFam" id="1.10.1540.10:FF:000001">
    <property type="entry name" value="neurobeachin isoform X1"/>
    <property type="match status" value="1"/>
</dbReference>
<dbReference type="Gene3D" id="1.10.1540.10">
    <property type="entry name" value="BEACH domain"/>
    <property type="match status" value="1"/>
</dbReference>
<dbReference type="Gene3D" id="2.30.29.30">
    <property type="entry name" value="Pleckstrin-homology domain (PH domain)/Phosphotyrosine-binding domain (PTB)"/>
    <property type="match status" value="1"/>
</dbReference>
<dbReference type="Gene3D" id="2.130.10.10">
    <property type="entry name" value="YVTN repeat-like/Quinoprotein amine dehydrogenase"/>
    <property type="match status" value="2"/>
</dbReference>
<dbReference type="InterPro" id="IPR016024">
    <property type="entry name" value="ARM-type_fold"/>
</dbReference>
<dbReference type="InterPro" id="IPR000409">
    <property type="entry name" value="BEACH_dom"/>
</dbReference>
<dbReference type="InterPro" id="IPR036372">
    <property type="entry name" value="BEACH_dom_sf"/>
</dbReference>
<dbReference type="InterPro" id="IPR050865">
    <property type="entry name" value="BEACH_Domain"/>
</dbReference>
<dbReference type="InterPro" id="IPR023362">
    <property type="entry name" value="PH-BEACH_dom"/>
</dbReference>
<dbReference type="InterPro" id="IPR011993">
    <property type="entry name" value="PH-like_dom_sf"/>
</dbReference>
<dbReference type="InterPro" id="IPR015943">
    <property type="entry name" value="WD40/YVTN_repeat-like_dom_sf"/>
</dbReference>
<dbReference type="InterPro" id="IPR019775">
    <property type="entry name" value="WD40_repeat_CS"/>
</dbReference>
<dbReference type="InterPro" id="IPR036322">
    <property type="entry name" value="WD40_repeat_dom_sf"/>
</dbReference>
<dbReference type="InterPro" id="IPR001680">
    <property type="entry name" value="WD40_rpt"/>
</dbReference>
<dbReference type="PANTHER" id="PTHR13743">
    <property type="entry name" value="BEIGE/BEACH-RELATED"/>
    <property type="match status" value="1"/>
</dbReference>
<dbReference type="PANTHER" id="PTHR13743:SF86">
    <property type="entry name" value="LYSOSOMAL-TRAFFICKING REGULATOR"/>
    <property type="match status" value="1"/>
</dbReference>
<dbReference type="Pfam" id="PF02138">
    <property type="entry name" value="Beach"/>
    <property type="match status" value="1"/>
</dbReference>
<dbReference type="Pfam" id="PF14844">
    <property type="entry name" value="PH_BEACH"/>
    <property type="match status" value="1"/>
</dbReference>
<dbReference type="Pfam" id="PF00400">
    <property type="entry name" value="WD40"/>
    <property type="match status" value="1"/>
</dbReference>
<dbReference type="SMART" id="SM01026">
    <property type="entry name" value="Beach"/>
    <property type="match status" value="1"/>
</dbReference>
<dbReference type="SMART" id="SM00320">
    <property type="entry name" value="WD40"/>
    <property type="match status" value="4"/>
</dbReference>
<dbReference type="SUPFAM" id="SSF48371">
    <property type="entry name" value="ARM repeat"/>
    <property type="match status" value="1"/>
</dbReference>
<dbReference type="SUPFAM" id="SSF81837">
    <property type="entry name" value="BEACH domain"/>
    <property type="match status" value="1"/>
</dbReference>
<dbReference type="SUPFAM" id="SSF50729">
    <property type="entry name" value="PH domain-like"/>
    <property type="match status" value="1"/>
</dbReference>
<dbReference type="SUPFAM" id="SSF50978">
    <property type="entry name" value="WD40 repeat-like"/>
    <property type="match status" value="1"/>
</dbReference>
<dbReference type="PROSITE" id="PS50197">
    <property type="entry name" value="BEACH"/>
    <property type="match status" value="1"/>
</dbReference>
<dbReference type="PROSITE" id="PS51783">
    <property type="entry name" value="PH_BEACH"/>
    <property type="match status" value="1"/>
</dbReference>
<dbReference type="PROSITE" id="PS00678">
    <property type="entry name" value="WD_REPEATS_1"/>
    <property type="match status" value="1"/>
</dbReference>
<dbReference type="PROSITE" id="PS50082">
    <property type="entry name" value="WD_REPEATS_2"/>
    <property type="match status" value="1"/>
</dbReference>
<dbReference type="PROSITE" id="PS50294">
    <property type="entry name" value="WD_REPEATS_REGION"/>
    <property type="match status" value="1"/>
</dbReference>
<organism>
    <name type="scientific">Mus musculus</name>
    <name type="common">Mouse</name>
    <dbReference type="NCBI Taxonomy" id="10090"/>
    <lineage>
        <taxon>Eukaryota</taxon>
        <taxon>Metazoa</taxon>
        <taxon>Chordata</taxon>
        <taxon>Craniata</taxon>
        <taxon>Vertebrata</taxon>
        <taxon>Euteleostomi</taxon>
        <taxon>Mammalia</taxon>
        <taxon>Eutheria</taxon>
        <taxon>Euarchontoglires</taxon>
        <taxon>Glires</taxon>
        <taxon>Rodentia</taxon>
        <taxon>Myomorpha</taxon>
        <taxon>Muroidea</taxon>
        <taxon>Muridae</taxon>
        <taxon>Murinae</taxon>
        <taxon>Mus</taxon>
        <taxon>Mus</taxon>
    </lineage>
</organism>
<name>LYST_MOUSE</name>